<feature type="chain" id="PRO_0000294213" description="Photosystem I P700 chlorophyll a apoprotein A1">
    <location>
        <begin position="1"/>
        <end position="750"/>
    </location>
</feature>
<feature type="transmembrane region" description="Helical; Name=I" evidence="1">
    <location>
        <begin position="70"/>
        <end position="93"/>
    </location>
</feature>
<feature type="transmembrane region" description="Helical; Name=II" evidence="1">
    <location>
        <begin position="156"/>
        <end position="179"/>
    </location>
</feature>
<feature type="transmembrane region" description="Helical; Name=III" evidence="1">
    <location>
        <begin position="195"/>
        <end position="219"/>
    </location>
</feature>
<feature type="transmembrane region" description="Helical; Name=IV" evidence="1">
    <location>
        <begin position="291"/>
        <end position="309"/>
    </location>
</feature>
<feature type="transmembrane region" description="Helical; Name=V" evidence="1">
    <location>
        <begin position="346"/>
        <end position="369"/>
    </location>
</feature>
<feature type="transmembrane region" description="Helical; Name=VI" evidence="1">
    <location>
        <begin position="385"/>
        <end position="411"/>
    </location>
</feature>
<feature type="transmembrane region" description="Helical; Name=VII" evidence="1">
    <location>
        <begin position="433"/>
        <end position="455"/>
    </location>
</feature>
<feature type="transmembrane region" description="Helical; Name=VIII" evidence="1">
    <location>
        <begin position="531"/>
        <end position="549"/>
    </location>
</feature>
<feature type="transmembrane region" description="Helical; Name=IX" evidence="1">
    <location>
        <begin position="589"/>
        <end position="610"/>
    </location>
</feature>
<feature type="transmembrane region" description="Helical; Name=X" evidence="1">
    <location>
        <begin position="664"/>
        <end position="686"/>
    </location>
</feature>
<feature type="transmembrane region" description="Helical; Name=XI" evidence="1">
    <location>
        <begin position="724"/>
        <end position="744"/>
    </location>
</feature>
<feature type="binding site" evidence="1">
    <location>
        <position position="573"/>
    </location>
    <ligand>
        <name>[4Fe-4S] cluster</name>
        <dbReference type="ChEBI" id="CHEBI:49883"/>
        <note>ligand shared between dimeric partners</note>
    </ligand>
</feature>
<feature type="binding site" evidence="1">
    <location>
        <position position="582"/>
    </location>
    <ligand>
        <name>[4Fe-4S] cluster</name>
        <dbReference type="ChEBI" id="CHEBI:49883"/>
        <note>ligand shared between dimeric partners</note>
    </ligand>
</feature>
<feature type="binding site" description="axial binding residue" evidence="1">
    <location>
        <position position="675"/>
    </location>
    <ligand>
        <name>chlorophyll a'</name>
        <dbReference type="ChEBI" id="CHEBI:189419"/>
        <label>A1</label>
    </ligand>
    <ligandPart>
        <name>Mg</name>
        <dbReference type="ChEBI" id="CHEBI:25107"/>
    </ligandPart>
</feature>
<feature type="binding site" description="axial binding residue" evidence="1">
    <location>
        <position position="683"/>
    </location>
    <ligand>
        <name>chlorophyll a</name>
        <dbReference type="ChEBI" id="CHEBI:58416"/>
        <label>A3</label>
    </ligand>
    <ligandPart>
        <name>Mg</name>
        <dbReference type="ChEBI" id="CHEBI:25107"/>
    </ligandPart>
</feature>
<feature type="binding site" evidence="1">
    <location>
        <position position="691"/>
    </location>
    <ligand>
        <name>chlorophyll a</name>
        <dbReference type="ChEBI" id="CHEBI:58416"/>
        <label>A3</label>
    </ligand>
</feature>
<feature type="binding site" evidence="1">
    <location>
        <position position="692"/>
    </location>
    <ligand>
        <name>phylloquinone</name>
        <dbReference type="ChEBI" id="CHEBI:18067"/>
        <label>A</label>
    </ligand>
</feature>
<protein>
    <recommendedName>
        <fullName evidence="1">Photosystem I P700 chlorophyll a apoprotein A1</fullName>
        <ecNumber evidence="1">1.97.1.12</ecNumber>
    </recommendedName>
    <alternativeName>
        <fullName evidence="1">PSI-A</fullName>
    </alternativeName>
    <alternativeName>
        <fullName evidence="1">PsaA</fullName>
    </alternativeName>
</protein>
<geneLocation type="chloroplast"/>
<dbReference type="EC" id="1.97.1.12" evidence="1"/>
<dbReference type="EMBL" id="AJ879453">
    <property type="protein sequence ID" value="CAI53794.1"/>
    <property type="molecule type" value="Genomic_DNA"/>
</dbReference>
<dbReference type="RefSeq" id="YP_319765.1">
    <property type="nucleotide sequence ID" value="NC_007407.1"/>
</dbReference>
<dbReference type="SMR" id="Q3V534"/>
<dbReference type="GeneID" id="3677495"/>
<dbReference type="GO" id="GO:0009535">
    <property type="term" value="C:chloroplast thylakoid membrane"/>
    <property type="evidence" value="ECO:0007669"/>
    <property type="project" value="UniProtKB-SubCell"/>
</dbReference>
<dbReference type="GO" id="GO:0009522">
    <property type="term" value="C:photosystem I"/>
    <property type="evidence" value="ECO:0007669"/>
    <property type="project" value="UniProtKB-KW"/>
</dbReference>
<dbReference type="GO" id="GO:0051539">
    <property type="term" value="F:4 iron, 4 sulfur cluster binding"/>
    <property type="evidence" value="ECO:0007669"/>
    <property type="project" value="UniProtKB-KW"/>
</dbReference>
<dbReference type="GO" id="GO:0016168">
    <property type="term" value="F:chlorophyll binding"/>
    <property type="evidence" value="ECO:0007669"/>
    <property type="project" value="UniProtKB-KW"/>
</dbReference>
<dbReference type="GO" id="GO:0009055">
    <property type="term" value="F:electron transfer activity"/>
    <property type="evidence" value="ECO:0007669"/>
    <property type="project" value="UniProtKB-UniRule"/>
</dbReference>
<dbReference type="GO" id="GO:0000287">
    <property type="term" value="F:magnesium ion binding"/>
    <property type="evidence" value="ECO:0007669"/>
    <property type="project" value="UniProtKB-UniRule"/>
</dbReference>
<dbReference type="GO" id="GO:0016491">
    <property type="term" value="F:oxidoreductase activity"/>
    <property type="evidence" value="ECO:0007669"/>
    <property type="project" value="UniProtKB-KW"/>
</dbReference>
<dbReference type="GO" id="GO:0015979">
    <property type="term" value="P:photosynthesis"/>
    <property type="evidence" value="ECO:0007669"/>
    <property type="project" value="UniProtKB-UniRule"/>
</dbReference>
<dbReference type="FunFam" id="1.20.1130.10:FF:000001">
    <property type="entry name" value="Photosystem I P700 chlorophyll a apoprotein A2"/>
    <property type="match status" value="1"/>
</dbReference>
<dbReference type="Gene3D" id="1.20.1130.10">
    <property type="entry name" value="Photosystem I PsaA/PsaB"/>
    <property type="match status" value="1"/>
</dbReference>
<dbReference type="HAMAP" id="MF_00458">
    <property type="entry name" value="PSI_PsaA"/>
    <property type="match status" value="1"/>
</dbReference>
<dbReference type="InterPro" id="IPR006243">
    <property type="entry name" value="PSI_PsaA"/>
</dbReference>
<dbReference type="InterPro" id="IPR001280">
    <property type="entry name" value="PSI_PsaA/B"/>
</dbReference>
<dbReference type="InterPro" id="IPR020586">
    <property type="entry name" value="PSI_PsaA/B_CS"/>
</dbReference>
<dbReference type="InterPro" id="IPR036408">
    <property type="entry name" value="PSI_PsaA/B_sf"/>
</dbReference>
<dbReference type="NCBIfam" id="TIGR01335">
    <property type="entry name" value="psaA"/>
    <property type="match status" value="1"/>
</dbReference>
<dbReference type="PANTHER" id="PTHR30128">
    <property type="entry name" value="OUTER MEMBRANE PROTEIN, OMPA-RELATED"/>
    <property type="match status" value="1"/>
</dbReference>
<dbReference type="PANTHER" id="PTHR30128:SF19">
    <property type="entry name" value="PHOTOSYSTEM I P700 CHLOROPHYLL A APOPROTEIN A1-RELATED"/>
    <property type="match status" value="1"/>
</dbReference>
<dbReference type="Pfam" id="PF00223">
    <property type="entry name" value="PsaA_PsaB"/>
    <property type="match status" value="1"/>
</dbReference>
<dbReference type="PIRSF" id="PIRSF002905">
    <property type="entry name" value="PSI_A"/>
    <property type="match status" value="1"/>
</dbReference>
<dbReference type="PRINTS" id="PR00257">
    <property type="entry name" value="PHOTSYSPSAAB"/>
</dbReference>
<dbReference type="SUPFAM" id="SSF81558">
    <property type="entry name" value="Photosystem I subunits PsaA/PsaB"/>
    <property type="match status" value="1"/>
</dbReference>
<dbReference type="PROSITE" id="PS00419">
    <property type="entry name" value="PHOTOSYSTEM_I_PSAAB"/>
    <property type="match status" value="1"/>
</dbReference>
<evidence type="ECO:0000255" key="1">
    <source>
        <dbReference type="HAMAP-Rule" id="MF_00458"/>
    </source>
</evidence>
<name>PSAA_ACOCL</name>
<organism>
    <name type="scientific">Acorus calamus</name>
    <name type="common">Sweet flag</name>
    <dbReference type="NCBI Taxonomy" id="4465"/>
    <lineage>
        <taxon>Eukaryota</taxon>
        <taxon>Viridiplantae</taxon>
        <taxon>Streptophyta</taxon>
        <taxon>Embryophyta</taxon>
        <taxon>Tracheophyta</taxon>
        <taxon>Spermatophyta</taxon>
        <taxon>Magnoliopsida</taxon>
        <taxon>Liliopsida</taxon>
        <taxon>Acoraceae</taxon>
        <taxon>Acorus</taxon>
    </lineage>
</organism>
<keyword id="KW-0004">4Fe-4S</keyword>
<keyword id="KW-0148">Chlorophyll</keyword>
<keyword id="KW-0150">Chloroplast</keyword>
<keyword id="KW-0157">Chromophore</keyword>
<keyword id="KW-0249">Electron transport</keyword>
<keyword id="KW-0408">Iron</keyword>
<keyword id="KW-0411">Iron-sulfur</keyword>
<keyword id="KW-0460">Magnesium</keyword>
<keyword id="KW-0472">Membrane</keyword>
<keyword id="KW-0479">Metal-binding</keyword>
<keyword id="KW-0560">Oxidoreductase</keyword>
<keyword id="KW-0602">Photosynthesis</keyword>
<keyword id="KW-0603">Photosystem I</keyword>
<keyword id="KW-0934">Plastid</keyword>
<keyword id="KW-0793">Thylakoid</keyword>
<keyword id="KW-0812">Transmembrane</keyword>
<keyword id="KW-1133">Transmembrane helix</keyword>
<keyword id="KW-0813">Transport</keyword>
<proteinExistence type="inferred from homology"/>
<reference key="1">
    <citation type="journal article" date="2005" name="Mol. Biol. Evol.">
        <title>Analysis of Acorus calamus chloroplast genome and its phylogenetic implications.</title>
        <authorList>
            <person name="Goremykin V.V."/>
            <person name="Holland B."/>
            <person name="Hirsch-Ernst K.I."/>
            <person name="Hellwig F.H."/>
        </authorList>
    </citation>
    <scope>NUCLEOTIDE SEQUENCE [LARGE SCALE GENOMIC DNA]</scope>
</reference>
<sequence>MIIRSPEPEVKIVVDRDPIKTSFEAWARPGHFSRTIAKGPDTTTWIWNLHADAHDFDSHTSDLEEISRKVFSAHFGQLSIIFLWLSGMYFHGARFSNYEAWLSDPTHIRPSAQVVWPIVGQEILNGDVGGGFRGIQITSGFFQIWRASGITSELQLYCTAIGALVFAALMLFAGWFHYHKAAPKLAWFQDVESMLNHHLAGLLGLGSLSWAGHQIHVSLPINQFLDAGVDPKEIPLPHEFILNRDLLAQLYPSFAEGATPFFTLNWSKYAEFLTFRGGLDPITGGLWLSDIAHHHLAIAILFLIAGHMYRTNWGIGHGLKDILEAHKGPFTGQGHKGLYEILTTSWHAQLALNLAMLGSLTIVVAHHMYSMPPYPYLATDYGTQLSLFTHHMWIGGFLIVGAAAHAAIFMVRDYDPTTRYNDLLDRVLRHRDAIISHLNWACIFLGFHSFGLYIHNDTMSALGRPQDMFSDTAIQLQPIFAQWVQNTHALAPVATAPGATTGTSLAWGGGELVAVGGKVALLPIPLGTADFLVHHIHAFTIHVTVLILLKGVLFARSSRLIPDKANLGFRFPCDGPGRGGTCQVSAWDHVFLGLFWMYNSISVVIFHFSWKMQSDVWGSISDQGVVTHITGGNFAQSSITINGWLRDFLWAQASQVIQSYGSSLSAYGLFFLGAHFVWAFSLMFLFSGRGYWQELIESIVWAHNKLKVAPATQPRALSIVQGRAVGVTHYLLGGIATTWAFFLARIIAVG</sequence>
<comment type="function">
    <text>PsaA and PsaB bind P700, the primary electron donor of photosystem I (PSI), as well as the electron acceptors A0, A1 and FX. PSI is a plastocyanin-ferredoxin oxidoreductase, converting photonic excitation into a charge separation, which transfers an electron from the donor P700 chlorophyll pair to the spectroscopically characterized acceptors A0, A1, FX, FA and FB in turn. Oxidized P700 is reduced on the lumenal side of the thylakoid membrane by plastocyanin.</text>
</comment>
<comment type="catalytic activity">
    <reaction evidence="1">
        <text>reduced [plastocyanin] + hnu + oxidized [2Fe-2S]-[ferredoxin] = oxidized [plastocyanin] + reduced [2Fe-2S]-[ferredoxin]</text>
        <dbReference type="Rhea" id="RHEA:30407"/>
        <dbReference type="Rhea" id="RHEA-COMP:10000"/>
        <dbReference type="Rhea" id="RHEA-COMP:10001"/>
        <dbReference type="Rhea" id="RHEA-COMP:10039"/>
        <dbReference type="Rhea" id="RHEA-COMP:10040"/>
        <dbReference type="ChEBI" id="CHEBI:29036"/>
        <dbReference type="ChEBI" id="CHEBI:30212"/>
        <dbReference type="ChEBI" id="CHEBI:33737"/>
        <dbReference type="ChEBI" id="CHEBI:33738"/>
        <dbReference type="ChEBI" id="CHEBI:49552"/>
        <dbReference type="EC" id="1.97.1.12"/>
    </reaction>
</comment>
<comment type="cofactor">
    <text evidence="1">P700 is a chlorophyll a/chlorophyll a' dimer, A0 is one or more chlorophyll a, A1 is one or both phylloquinones and FX is a shared 4Fe-4S iron-sulfur center.</text>
</comment>
<comment type="subunit">
    <text evidence="1">The PsaA/B heterodimer binds the P700 chlorophyll special pair and subsequent electron acceptors. PSI consists of a core antenna complex that captures photons, and an electron transfer chain that converts photonic excitation into a charge separation. The eukaryotic PSI reaction center is composed of at least 11 subunits.</text>
</comment>
<comment type="subcellular location">
    <subcellularLocation>
        <location evidence="1">Plastid</location>
        <location evidence="1">Chloroplast thylakoid membrane</location>
        <topology evidence="1">Multi-pass membrane protein</topology>
    </subcellularLocation>
</comment>
<comment type="similarity">
    <text evidence="1">Belongs to the PsaA/PsaB family.</text>
</comment>
<gene>
    <name evidence="1" type="primary">psaA</name>
</gene>
<accession>Q3V534</accession>